<feature type="chain" id="PRO_0000237384" description="Glutamate--tRNA ligase">
    <location>
        <begin position="1"/>
        <end position="504"/>
    </location>
</feature>
<feature type="short sequence motif" description="'HIGH' region" evidence="1">
    <location>
        <begin position="14"/>
        <end position="24"/>
    </location>
</feature>
<feature type="short sequence motif" description="'KMSKS' region" evidence="1">
    <location>
        <begin position="261"/>
        <end position="265"/>
    </location>
</feature>
<feature type="binding site" evidence="1">
    <location>
        <position position="264"/>
    </location>
    <ligand>
        <name>ATP</name>
        <dbReference type="ChEBI" id="CHEBI:30616"/>
    </ligand>
</feature>
<keyword id="KW-0030">Aminoacyl-tRNA synthetase</keyword>
<keyword id="KW-0067">ATP-binding</keyword>
<keyword id="KW-0963">Cytoplasm</keyword>
<keyword id="KW-0436">Ligase</keyword>
<keyword id="KW-0547">Nucleotide-binding</keyword>
<keyword id="KW-0648">Protein biosynthesis</keyword>
<keyword id="KW-1185">Reference proteome</keyword>
<proteinExistence type="inferred from homology"/>
<sequence length="504" mass="57956">MHMVGKRVRTRFAPSPTGYLHVGGLRTALYNYLFAKKMNGDFIIRIEDTDQSRKVEGAQQNLIKTLEWAGLVPDESPVHGGNFGPYLQSERLELYAGYCRQLLEDGTAYYCFATSEELEENRQLQMKQGLQPKYNRKWLPEDMGGSMPRSESEKMLASGAPYVIRMKVPDYVSVWFEDIIRGPIEFDSATIDDQVLMKSDGFPTYHFASVIDDHLMEFTHIIRGEEWLPSMPKHLLLYEFFGWEPPKYAHLPLLLNPDRSKLSKRQGDVAVEDYIQKGYSQEAIINFIALLGWNEGEGCEQEVYSMEQLIDRFSLERVGKAGSIFTIDKLNWLEKQYIKNRPAEKIIETIRPLLQEELSSKETMLDREVITGDDYLRQVIELMRERVGFEHEFVTFSSYFFFEPETWEEEAVKKRWTSDTPALLSEFLPTLEGLPEFTSDAIEAALKAFVEPKGLKAAVLIHPLRILASGVSFGPSLYHMLEVLGREAVLRRIRKGMECITVPA</sequence>
<evidence type="ECO:0000255" key="1">
    <source>
        <dbReference type="HAMAP-Rule" id="MF_00022"/>
    </source>
</evidence>
<protein>
    <recommendedName>
        <fullName evidence="1">Glutamate--tRNA ligase</fullName>
        <ecNumber evidence="1">6.1.1.17</ecNumber>
    </recommendedName>
    <alternativeName>
        <fullName evidence="1">Glutamyl-tRNA synthetase</fullName>
        <shortName evidence="1">GluRS</shortName>
    </alternativeName>
</protein>
<accession>Q3B256</accession>
<dbReference type="EC" id="6.1.1.17" evidence="1"/>
<dbReference type="EMBL" id="CP000096">
    <property type="protein sequence ID" value="ABB24575.1"/>
    <property type="molecule type" value="Genomic_DNA"/>
</dbReference>
<dbReference type="SMR" id="Q3B256"/>
<dbReference type="STRING" id="319225.Plut_1721"/>
<dbReference type="KEGG" id="plt:Plut_1721"/>
<dbReference type="eggNOG" id="COG0008">
    <property type="taxonomic scope" value="Bacteria"/>
</dbReference>
<dbReference type="HOGENOM" id="CLU_015768_6_1_10"/>
<dbReference type="Proteomes" id="UP000002709">
    <property type="component" value="Chromosome"/>
</dbReference>
<dbReference type="GO" id="GO:0005737">
    <property type="term" value="C:cytoplasm"/>
    <property type="evidence" value="ECO:0007669"/>
    <property type="project" value="UniProtKB-SubCell"/>
</dbReference>
<dbReference type="GO" id="GO:0005524">
    <property type="term" value="F:ATP binding"/>
    <property type="evidence" value="ECO:0007669"/>
    <property type="project" value="UniProtKB-UniRule"/>
</dbReference>
<dbReference type="GO" id="GO:0004818">
    <property type="term" value="F:glutamate-tRNA ligase activity"/>
    <property type="evidence" value="ECO:0007669"/>
    <property type="project" value="UniProtKB-UniRule"/>
</dbReference>
<dbReference type="GO" id="GO:0000049">
    <property type="term" value="F:tRNA binding"/>
    <property type="evidence" value="ECO:0007669"/>
    <property type="project" value="InterPro"/>
</dbReference>
<dbReference type="GO" id="GO:0008270">
    <property type="term" value="F:zinc ion binding"/>
    <property type="evidence" value="ECO:0007669"/>
    <property type="project" value="InterPro"/>
</dbReference>
<dbReference type="GO" id="GO:0006424">
    <property type="term" value="P:glutamyl-tRNA aminoacylation"/>
    <property type="evidence" value="ECO:0007669"/>
    <property type="project" value="UniProtKB-UniRule"/>
</dbReference>
<dbReference type="CDD" id="cd00808">
    <property type="entry name" value="GluRS_core"/>
    <property type="match status" value="1"/>
</dbReference>
<dbReference type="FunFam" id="3.40.50.620:FF:000045">
    <property type="entry name" value="Glutamate--tRNA ligase, mitochondrial"/>
    <property type="match status" value="1"/>
</dbReference>
<dbReference type="Gene3D" id="1.10.10.350">
    <property type="match status" value="1"/>
</dbReference>
<dbReference type="Gene3D" id="3.40.50.620">
    <property type="entry name" value="HUPs"/>
    <property type="match status" value="1"/>
</dbReference>
<dbReference type="HAMAP" id="MF_00022">
    <property type="entry name" value="Glu_tRNA_synth_type1"/>
    <property type="match status" value="1"/>
</dbReference>
<dbReference type="InterPro" id="IPR045462">
    <property type="entry name" value="aa-tRNA-synth_I_cd-bd"/>
</dbReference>
<dbReference type="InterPro" id="IPR020751">
    <property type="entry name" value="aa-tRNA-synth_I_codon-bd_sub2"/>
</dbReference>
<dbReference type="InterPro" id="IPR001412">
    <property type="entry name" value="aa-tRNA-synth_I_CS"/>
</dbReference>
<dbReference type="InterPro" id="IPR008925">
    <property type="entry name" value="aa_tRNA-synth_I_cd-bd_sf"/>
</dbReference>
<dbReference type="InterPro" id="IPR004527">
    <property type="entry name" value="Glu-tRNA-ligase_bac/mito"/>
</dbReference>
<dbReference type="InterPro" id="IPR000924">
    <property type="entry name" value="Glu/Gln-tRNA-synth"/>
</dbReference>
<dbReference type="InterPro" id="IPR020058">
    <property type="entry name" value="Glu/Gln-tRNA-synth_Ib_cat-dom"/>
</dbReference>
<dbReference type="InterPro" id="IPR049940">
    <property type="entry name" value="GluQ/Sye"/>
</dbReference>
<dbReference type="InterPro" id="IPR033910">
    <property type="entry name" value="GluRS_core"/>
</dbReference>
<dbReference type="InterPro" id="IPR014729">
    <property type="entry name" value="Rossmann-like_a/b/a_fold"/>
</dbReference>
<dbReference type="NCBIfam" id="TIGR00464">
    <property type="entry name" value="gltX_bact"/>
    <property type="match status" value="1"/>
</dbReference>
<dbReference type="PANTHER" id="PTHR43311">
    <property type="entry name" value="GLUTAMATE--TRNA LIGASE"/>
    <property type="match status" value="1"/>
</dbReference>
<dbReference type="PANTHER" id="PTHR43311:SF2">
    <property type="entry name" value="GLUTAMATE--TRNA LIGASE, MITOCHONDRIAL-RELATED"/>
    <property type="match status" value="1"/>
</dbReference>
<dbReference type="Pfam" id="PF19269">
    <property type="entry name" value="Anticodon_2"/>
    <property type="match status" value="1"/>
</dbReference>
<dbReference type="Pfam" id="PF00749">
    <property type="entry name" value="tRNA-synt_1c"/>
    <property type="match status" value="1"/>
</dbReference>
<dbReference type="PRINTS" id="PR00987">
    <property type="entry name" value="TRNASYNTHGLU"/>
</dbReference>
<dbReference type="SUPFAM" id="SSF48163">
    <property type="entry name" value="An anticodon-binding domain of class I aminoacyl-tRNA synthetases"/>
    <property type="match status" value="1"/>
</dbReference>
<dbReference type="SUPFAM" id="SSF52374">
    <property type="entry name" value="Nucleotidylyl transferase"/>
    <property type="match status" value="1"/>
</dbReference>
<dbReference type="PROSITE" id="PS00178">
    <property type="entry name" value="AA_TRNA_LIGASE_I"/>
    <property type="match status" value="1"/>
</dbReference>
<organism>
    <name type="scientific">Chlorobium luteolum (strain DSM 273 / BCRC 81028 / 2530)</name>
    <name type="common">Pelodictyon luteolum</name>
    <dbReference type="NCBI Taxonomy" id="319225"/>
    <lineage>
        <taxon>Bacteria</taxon>
        <taxon>Pseudomonadati</taxon>
        <taxon>Chlorobiota</taxon>
        <taxon>Chlorobiia</taxon>
        <taxon>Chlorobiales</taxon>
        <taxon>Chlorobiaceae</taxon>
        <taxon>Chlorobium/Pelodictyon group</taxon>
        <taxon>Pelodictyon</taxon>
    </lineage>
</organism>
<reference key="1">
    <citation type="submission" date="2005-08" db="EMBL/GenBank/DDBJ databases">
        <title>Complete sequence of Pelodictyon luteolum DSM 273.</title>
        <authorList>
            <consortium name="US DOE Joint Genome Institute"/>
            <person name="Copeland A."/>
            <person name="Lucas S."/>
            <person name="Lapidus A."/>
            <person name="Barry K."/>
            <person name="Detter J.C."/>
            <person name="Glavina T."/>
            <person name="Hammon N."/>
            <person name="Israni S."/>
            <person name="Pitluck S."/>
            <person name="Bryant D."/>
            <person name="Schmutz J."/>
            <person name="Larimer F."/>
            <person name="Land M."/>
            <person name="Kyrpides N."/>
            <person name="Ivanova N."/>
            <person name="Richardson P."/>
        </authorList>
    </citation>
    <scope>NUCLEOTIDE SEQUENCE [LARGE SCALE GENOMIC DNA]</scope>
    <source>
        <strain>DSM 273 / BCRC 81028 / 2530</strain>
    </source>
</reference>
<comment type="function">
    <text evidence="1">Catalyzes the attachment of glutamate to tRNA(Glu) in a two-step reaction: glutamate is first activated by ATP to form Glu-AMP and then transferred to the acceptor end of tRNA(Glu).</text>
</comment>
<comment type="catalytic activity">
    <reaction evidence="1">
        <text>tRNA(Glu) + L-glutamate + ATP = L-glutamyl-tRNA(Glu) + AMP + diphosphate</text>
        <dbReference type="Rhea" id="RHEA:23540"/>
        <dbReference type="Rhea" id="RHEA-COMP:9663"/>
        <dbReference type="Rhea" id="RHEA-COMP:9680"/>
        <dbReference type="ChEBI" id="CHEBI:29985"/>
        <dbReference type="ChEBI" id="CHEBI:30616"/>
        <dbReference type="ChEBI" id="CHEBI:33019"/>
        <dbReference type="ChEBI" id="CHEBI:78442"/>
        <dbReference type="ChEBI" id="CHEBI:78520"/>
        <dbReference type="ChEBI" id="CHEBI:456215"/>
        <dbReference type="EC" id="6.1.1.17"/>
    </reaction>
</comment>
<comment type="subunit">
    <text evidence="1">Monomer.</text>
</comment>
<comment type="subcellular location">
    <subcellularLocation>
        <location evidence="1">Cytoplasm</location>
    </subcellularLocation>
</comment>
<comment type="similarity">
    <text evidence="1">Belongs to the class-I aminoacyl-tRNA synthetase family. Glutamate--tRNA ligase type 1 subfamily.</text>
</comment>
<name>SYE_CHLL3</name>
<gene>
    <name evidence="1" type="primary">gltX</name>
    <name type="ordered locus">Plut_1721</name>
</gene>